<organism>
    <name type="scientific">Arabidopsis thaliana</name>
    <name type="common">Mouse-ear cress</name>
    <dbReference type="NCBI Taxonomy" id="3702"/>
    <lineage>
        <taxon>Eukaryota</taxon>
        <taxon>Viridiplantae</taxon>
        <taxon>Streptophyta</taxon>
        <taxon>Embryophyta</taxon>
        <taxon>Tracheophyta</taxon>
        <taxon>Spermatophyta</taxon>
        <taxon>Magnoliopsida</taxon>
        <taxon>eudicotyledons</taxon>
        <taxon>Gunneridae</taxon>
        <taxon>Pentapetalae</taxon>
        <taxon>rosids</taxon>
        <taxon>malvids</taxon>
        <taxon>Brassicales</taxon>
        <taxon>Brassicaceae</taxon>
        <taxon>Camelineae</taxon>
        <taxon>Arabidopsis</taxon>
    </lineage>
</organism>
<sequence>MQLTMSSSKMKSLLKGLRYISQVFESEKEEEIQIGNPTDVKHVAHIGWDGPSANATAPSWMTEFNSGGGFESAEGVGEDDSSIKCMSEYGGRSRDLPNLPKSTRKAASEKGSPTKDKSSDKTKRRSSNKGTSSSSRRPKEATEEQDELSSWPSGLPEIPKKSRRKKKSTKETAVNGGSSRSTRRSDVDNMSEYMSETGSVRSMPQFDNRDDF</sequence>
<dbReference type="EMBL" id="AC006569">
    <property type="protein sequence ID" value="AAM15282.1"/>
    <property type="status" value="ALT_INIT"/>
    <property type="molecule type" value="Genomic_DNA"/>
</dbReference>
<dbReference type="EMBL" id="AC007109">
    <property type="protein sequence ID" value="AAD25644.2"/>
    <property type="status" value="ALT_INIT"/>
    <property type="molecule type" value="Genomic_DNA"/>
</dbReference>
<dbReference type="EMBL" id="CP002685">
    <property type="protein sequence ID" value="AEC07006.1"/>
    <property type="molecule type" value="Genomic_DNA"/>
</dbReference>
<dbReference type="EMBL" id="DQ446531">
    <property type="protein sequence ID" value="ABE65834.1"/>
    <property type="molecule type" value="mRNA"/>
</dbReference>
<dbReference type="EMBL" id="DQ653006">
    <property type="protein sequence ID" value="ABK28502.1"/>
    <property type="status" value="ALT_SEQ"/>
    <property type="molecule type" value="mRNA"/>
</dbReference>
<dbReference type="PIR" id="B84589">
    <property type="entry name" value="B84589"/>
</dbReference>
<dbReference type="RefSeq" id="NP_179633.2">
    <property type="nucleotide sequence ID" value="NM_127602.4"/>
</dbReference>
<dbReference type="BioGRID" id="1915">
    <property type="interactions" value="1"/>
</dbReference>
<dbReference type="FunCoup" id="Q1PF35">
    <property type="interactions" value="88"/>
</dbReference>
<dbReference type="STRING" id="3702.Q1PF35"/>
<dbReference type="PaxDb" id="3702-AT2G20430.1"/>
<dbReference type="ProteomicsDB" id="236984"/>
<dbReference type="EnsemblPlants" id="AT2G20430.1">
    <property type="protein sequence ID" value="AT2G20430.1"/>
    <property type="gene ID" value="AT2G20430"/>
</dbReference>
<dbReference type="GeneID" id="816562"/>
<dbReference type="Gramene" id="AT2G20430.1">
    <property type="protein sequence ID" value="AT2G20430.1"/>
    <property type="gene ID" value="AT2G20430"/>
</dbReference>
<dbReference type="KEGG" id="ath:AT2G20430"/>
<dbReference type="Araport" id="AT2G20430"/>
<dbReference type="TAIR" id="AT2G20430">
    <property type="gene designation" value="RIC6"/>
</dbReference>
<dbReference type="eggNOG" id="ENOG502S2ZY">
    <property type="taxonomic scope" value="Eukaryota"/>
</dbReference>
<dbReference type="HOGENOM" id="CLU_086489_2_0_1"/>
<dbReference type="InParanoid" id="Q1PF35"/>
<dbReference type="OMA" id="SIKCMSE"/>
<dbReference type="OrthoDB" id="4206278at2759"/>
<dbReference type="PhylomeDB" id="Q1PF35"/>
<dbReference type="PRO" id="PR:Q1PF35"/>
<dbReference type="Proteomes" id="UP000006548">
    <property type="component" value="Chromosome 2"/>
</dbReference>
<dbReference type="ExpressionAtlas" id="Q1PF35">
    <property type="expression patterns" value="baseline and differential"/>
</dbReference>
<dbReference type="GO" id="GO:0016324">
    <property type="term" value="C:apical plasma membrane"/>
    <property type="evidence" value="ECO:0000314"/>
    <property type="project" value="TAIR"/>
</dbReference>
<dbReference type="GO" id="GO:0009860">
    <property type="term" value="P:pollen tube growth"/>
    <property type="evidence" value="ECO:0000315"/>
    <property type="project" value="TAIR"/>
</dbReference>
<dbReference type="CDD" id="cd00132">
    <property type="entry name" value="CRIB"/>
    <property type="match status" value="1"/>
</dbReference>
<dbReference type="FunFam" id="3.90.810.10:FF:000029">
    <property type="entry name" value="Elongation factor Ts, mitochondrial"/>
    <property type="match status" value="1"/>
</dbReference>
<dbReference type="Gene3D" id="3.90.810.10">
    <property type="entry name" value="CRIB domain"/>
    <property type="match status" value="1"/>
</dbReference>
<dbReference type="InterPro" id="IPR000095">
    <property type="entry name" value="CRIB_dom"/>
</dbReference>
<dbReference type="InterPro" id="IPR036936">
    <property type="entry name" value="CRIB_dom_sf"/>
</dbReference>
<dbReference type="PANTHER" id="PTHR46325:SF9">
    <property type="entry name" value="CRIB DOMAIN-CONTAINING PROTEIN RIC6-RELATED"/>
    <property type="match status" value="1"/>
</dbReference>
<dbReference type="PANTHER" id="PTHR46325">
    <property type="entry name" value="CRIB DOMAIN-CONTAINING PROTEIN RIC8"/>
    <property type="match status" value="1"/>
</dbReference>
<dbReference type="Pfam" id="PF00786">
    <property type="entry name" value="PBD"/>
    <property type="match status" value="1"/>
</dbReference>
<dbReference type="SMART" id="SM00285">
    <property type="entry name" value="PBD"/>
    <property type="match status" value="1"/>
</dbReference>
<dbReference type="PROSITE" id="PS50108">
    <property type="entry name" value="CRIB"/>
    <property type="match status" value="1"/>
</dbReference>
<keyword id="KW-1003">Cell membrane</keyword>
<keyword id="KW-0341">Growth regulation</keyword>
<keyword id="KW-0472">Membrane</keyword>
<keyword id="KW-1185">Reference proteome</keyword>
<accession>Q1PF35</accession>
<accession>A0MEN4</accession>
<accession>Q9SIM6</accession>
<reference key="1">
    <citation type="journal article" date="1999" name="Nature">
        <title>Sequence and analysis of chromosome 2 of the plant Arabidopsis thaliana.</title>
        <authorList>
            <person name="Lin X."/>
            <person name="Kaul S."/>
            <person name="Rounsley S.D."/>
            <person name="Shea T.P."/>
            <person name="Benito M.-I."/>
            <person name="Town C.D."/>
            <person name="Fujii C.Y."/>
            <person name="Mason T.M."/>
            <person name="Bowman C.L."/>
            <person name="Barnstead M.E."/>
            <person name="Feldblyum T.V."/>
            <person name="Buell C.R."/>
            <person name="Ketchum K.A."/>
            <person name="Lee J.J."/>
            <person name="Ronning C.M."/>
            <person name="Koo H.L."/>
            <person name="Moffat K.S."/>
            <person name="Cronin L.A."/>
            <person name="Shen M."/>
            <person name="Pai G."/>
            <person name="Van Aken S."/>
            <person name="Umayam L."/>
            <person name="Tallon L.J."/>
            <person name="Gill J.E."/>
            <person name="Adams M.D."/>
            <person name="Carrera A.J."/>
            <person name="Creasy T.H."/>
            <person name="Goodman H.M."/>
            <person name="Somerville C.R."/>
            <person name="Copenhaver G.P."/>
            <person name="Preuss D."/>
            <person name="Nierman W.C."/>
            <person name="White O."/>
            <person name="Eisen J.A."/>
            <person name="Salzberg S.L."/>
            <person name="Fraser C.M."/>
            <person name="Venter J.C."/>
        </authorList>
    </citation>
    <scope>NUCLEOTIDE SEQUENCE [LARGE SCALE GENOMIC DNA]</scope>
    <source>
        <strain>cv. Columbia</strain>
    </source>
</reference>
<reference key="2">
    <citation type="journal article" date="2017" name="Plant J.">
        <title>Araport11: a complete reannotation of the Arabidopsis thaliana reference genome.</title>
        <authorList>
            <person name="Cheng C.Y."/>
            <person name="Krishnakumar V."/>
            <person name="Chan A.P."/>
            <person name="Thibaud-Nissen F."/>
            <person name="Schobel S."/>
            <person name="Town C.D."/>
        </authorList>
    </citation>
    <scope>GENOME REANNOTATION</scope>
    <source>
        <strain>cv. Columbia</strain>
    </source>
</reference>
<reference key="3">
    <citation type="journal article" date="2006" name="Plant Biotechnol. J.">
        <title>Simultaneous high-throughput recombinational cloning of open reading frames in closed and open configurations.</title>
        <authorList>
            <person name="Underwood B.A."/>
            <person name="Vanderhaeghen R."/>
            <person name="Whitford R."/>
            <person name="Town C.D."/>
            <person name="Hilson P."/>
        </authorList>
    </citation>
    <scope>NUCLEOTIDE SEQUENCE [LARGE SCALE MRNA]</scope>
    <source>
        <strain>cv. Columbia</strain>
    </source>
</reference>
<reference key="4">
    <citation type="journal article" date="2001" name="Plant Cell">
        <title>A genome-wide analysis of Arabidopsis Rop-interactive CRIB motif-containing proteins that act as Rop GTPase targets.</title>
        <authorList>
            <person name="Wu G."/>
            <person name="Gu Y."/>
            <person name="Li S."/>
            <person name="Yang Z."/>
        </authorList>
    </citation>
    <scope>FUNCTION</scope>
    <scope>INTERACTION WITH ARAC11/ROP1</scope>
    <scope>SUBCELLULAR LOCATION</scope>
    <scope>TISSUE SPECIFICITY</scope>
    <scope>GENE FAMILY</scope>
    <scope>NOMENCLATURE</scope>
</reference>
<name>RIC6_ARATH</name>
<comment type="function">
    <text evidence="3">Functions as a downstream effector of Rho-related GTP binding proteins of the 'Rho of Plants' (ROPs) family. Participates in the propagation of ROP GTPase signals in specific cellular responses. Is involved in pollen tube growth regulation through its interaction with ARAC11/ROP1.</text>
</comment>
<comment type="subunit">
    <text evidence="3">Interacts with ARAC11/ROP1.</text>
</comment>
<comment type="subcellular location">
    <subcellularLocation>
        <location evidence="5">Cell membrane</location>
        <topology evidence="5">Peripheral membrane protein</topology>
    </subcellularLocation>
</comment>
<comment type="tissue specificity">
    <text evidence="3">Expressed in flowers and pollen.</text>
</comment>
<comment type="miscellaneous">
    <text evidence="5">Over-expression of RIC6 in tobacco germinating pollen reduces pollen tube elongation.</text>
</comment>
<comment type="sequence caution" evidence="4">
    <conflict type="erroneous initiation">
        <sequence resource="EMBL-CDS" id="AAD25644"/>
    </conflict>
    <text>Truncated N-terminus.</text>
</comment>
<comment type="sequence caution" evidence="4">
    <conflict type="erroneous initiation">
        <sequence resource="EMBL-CDS" id="AAM15282"/>
    </conflict>
    <text>Truncated N-terminus.</text>
</comment>
<comment type="sequence caution" evidence="4">
    <conflict type="erroneous termination">
        <sequence resource="EMBL-CDS" id="ABK28502"/>
    </conflict>
    <text>Extended C-terminus.</text>
</comment>
<proteinExistence type="evidence at protein level"/>
<protein>
    <recommendedName>
        <fullName>CRIB domain-containing protein RIC6</fullName>
    </recommendedName>
    <alternativeName>
        <fullName>ROP-interactive CRIB motif-containing protein 6</fullName>
    </alternativeName>
    <alternativeName>
        <fullName>Target of ROP protein RIC6</fullName>
    </alternativeName>
</protein>
<evidence type="ECO:0000255" key="1">
    <source>
        <dbReference type="PROSITE-ProRule" id="PRU00057"/>
    </source>
</evidence>
<evidence type="ECO:0000256" key="2">
    <source>
        <dbReference type="SAM" id="MobiDB-lite"/>
    </source>
</evidence>
<evidence type="ECO:0000269" key="3">
    <source>
    </source>
</evidence>
<evidence type="ECO:0000305" key="4"/>
<evidence type="ECO:0000305" key="5">
    <source>
    </source>
</evidence>
<gene>
    <name type="primary">RIC6</name>
    <name type="ordered locus">At2g20430</name>
    <name type="ORF">T13C7.2</name>
</gene>
<feature type="chain" id="PRO_0000422729" description="CRIB domain-containing protein RIC6">
    <location>
        <begin position="1"/>
        <end position="212"/>
    </location>
</feature>
<feature type="domain" description="CRIB" evidence="1">
    <location>
        <begin position="34"/>
        <end position="47"/>
    </location>
</feature>
<feature type="region of interest" description="Disordered" evidence="2">
    <location>
        <begin position="51"/>
        <end position="212"/>
    </location>
</feature>
<feature type="compositionally biased region" description="Polar residues" evidence="2">
    <location>
        <begin position="53"/>
        <end position="65"/>
    </location>
</feature>
<feature type="compositionally biased region" description="Basic and acidic residues" evidence="2">
    <location>
        <begin position="106"/>
        <end position="121"/>
    </location>
</feature>
<feature type="compositionally biased region" description="Polar residues" evidence="2">
    <location>
        <begin position="192"/>
        <end position="202"/>
    </location>
</feature>